<gene>
    <name type="ordered locus">LS215_0048</name>
</gene>
<organism>
    <name type="scientific">Saccharolobus islandicus (strain L.S.2.15 / Lassen #1)</name>
    <name type="common">Sulfolobus islandicus</name>
    <dbReference type="NCBI Taxonomy" id="429572"/>
    <lineage>
        <taxon>Archaea</taxon>
        <taxon>Thermoproteota</taxon>
        <taxon>Thermoprotei</taxon>
        <taxon>Sulfolobales</taxon>
        <taxon>Sulfolobaceae</taxon>
        <taxon>Saccharolobus</taxon>
    </lineage>
</organism>
<evidence type="ECO:0000255" key="1">
    <source>
        <dbReference type="HAMAP-Rule" id="MF_00648"/>
    </source>
</evidence>
<sequence>MVTIALGSKNPVKINATKEALDVLKLNWDLIGIEVDSGVDKQPFCDQTYVGARNRALNVIRVTNADIGLGIEGGVCNVYGKFIANAVVYVITKEGLENFAISSSFTLPSSMVSLILQGKELGEASDIIFKTNNSKTKEGAIGLLTNNVINRKMLYVQPIVLALYPIYNTMINNTPF</sequence>
<comment type="function">
    <text evidence="1">Phosphatase that hydrolyzes non-canonical purine nucleotides such as XTP and ITP to their respective diphosphate derivatives. Probably excludes non-canonical purines from DNA/RNA precursor pool, thus preventing their incorporation into DNA/RNA and avoiding chromosomal lesions.</text>
</comment>
<comment type="catalytic activity">
    <reaction evidence="1">
        <text>XTP + H2O = XDP + phosphate + H(+)</text>
        <dbReference type="Rhea" id="RHEA:28406"/>
        <dbReference type="ChEBI" id="CHEBI:15377"/>
        <dbReference type="ChEBI" id="CHEBI:15378"/>
        <dbReference type="ChEBI" id="CHEBI:43474"/>
        <dbReference type="ChEBI" id="CHEBI:59884"/>
        <dbReference type="ChEBI" id="CHEBI:61314"/>
        <dbReference type="EC" id="3.6.1.73"/>
    </reaction>
</comment>
<comment type="catalytic activity">
    <reaction evidence="1">
        <text>ITP + H2O = IDP + phosphate + H(+)</text>
        <dbReference type="Rhea" id="RHEA:28330"/>
        <dbReference type="ChEBI" id="CHEBI:15377"/>
        <dbReference type="ChEBI" id="CHEBI:15378"/>
        <dbReference type="ChEBI" id="CHEBI:43474"/>
        <dbReference type="ChEBI" id="CHEBI:58280"/>
        <dbReference type="ChEBI" id="CHEBI:61402"/>
        <dbReference type="EC" id="3.6.1.73"/>
    </reaction>
</comment>
<comment type="cofactor">
    <cofactor evidence="1">
        <name>Mg(2+)</name>
        <dbReference type="ChEBI" id="CHEBI:18420"/>
    </cofactor>
    <cofactor evidence="1">
        <name>Mn(2+)</name>
        <dbReference type="ChEBI" id="CHEBI:29035"/>
    </cofactor>
    <text evidence="1">Binds 1 divalent metal cation per subunit; can use either Mg(2+) or Mn(2+).</text>
</comment>
<comment type="subunit">
    <text evidence="1">Homodimer.</text>
</comment>
<comment type="similarity">
    <text evidence="1">Belongs to the YjjX NTPase family.</text>
</comment>
<reference key="1">
    <citation type="journal article" date="2009" name="Proc. Natl. Acad. Sci. U.S.A.">
        <title>Biogeography of the Sulfolobus islandicus pan-genome.</title>
        <authorList>
            <person name="Reno M.L."/>
            <person name="Held N.L."/>
            <person name="Fields C.J."/>
            <person name="Burke P.V."/>
            <person name="Whitaker R.J."/>
        </authorList>
    </citation>
    <scope>NUCLEOTIDE SEQUENCE [LARGE SCALE GENOMIC DNA]</scope>
    <source>
        <strain>L.S.2.15 / Lassen #1</strain>
    </source>
</reference>
<feature type="chain" id="PRO_1000212393" description="Probable inosine/xanthosine triphosphatase">
    <location>
        <begin position="1"/>
        <end position="176"/>
    </location>
</feature>
<feature type="binding site" evidence="1">
    <location>
        <position position="36"/>
    </location>
    <ligand>
        <name>Mg(2+)</name>
        <dbReference type="ChEBI" id="CHEBI:18420"/>
    </ligand>
</feature>
<name>NCPP_SACI2</name>
<accession>C3MJC4</accession>
<proteinExistence type="inferred from homology"/>
<dbReference type="EC" id="3.6.1.73" evidence="1"/>
<dbReference type="EMBL" id="CP001399">
    <property type="protein sequence ID" value="ACP34202.1"/>
    <property type="molecule type" value="Genomic_DNA"/>
</dbReference>
<dbReference type="RefSeq" id="WP_012712728.1">
    <property type="nucleotide sequence ID" value="NC_012589.1"/>
</dbReference>
<dbReference type="SMR" id="C3MJC4"/>
<dbReference type="GeneID" id="15296537"/>
<dbReference type="KEGG" id="sis:LS215_0048"/>
<dbReference type="HOGENOM" id="CLU_087417_0_0_2"/>
<dbReference type="OrthoDB" id="52857at2157"/>
<dbReference type="Proteomes" id="UP000001747">
    <property type="component" value="Chromosome"/>
</dbReference>
<dbReference type="GO" id="GO:0103023">
    <property type="term" value="F:ITPase activity"/>
    <property type="evidence" value="ECO:0007669"/>
    <property type="project" value="UniProtKB-EC"/>
</dbReference>
<dbReference type="GO" id="GO:0046872">
    <property type="term" value="F:metal ion binding"/>
    <property type="evidence" value="ECO:0007669"/>
    <property type="project" value="UniProtKB-KW"/>
</dbReference>
<dbReference type="GO" id="GO:0000166">
    <property type="term" value="F:nucleotide binding"/>
    <property type="evidence" value="ECO:0007669"/>
    <property type="project" value="UniProtKB-KW"/>
</dbReference>
<dbReference type="GO" id="GO:0017111">
    <property type="term" value="F:ribonucleoside triphosphate phosphatase activity"/>
    <property type="evidence" value="ECO:0000250"/>
    <property type="project" value="UniProtKB"/>
</dbReference>
<dbReference type="GO" id="GO:0009117">
    <property type="term" value="P:nucleotide metabolic process"/>
    <property type="evidence" value="ECO:0007669"/>
    <property type="project" value="UniProtKB-KW"/>
</dbReference>
<dbReference type="GO" id="GO:0006772">
    <property type="term" value="P:thiamine metabolic process"/>
    <property type="evidence" value="ECO:0007669"/>
    <property type="project" value="TreeGrafter"/>
</dbReference>
<dbReference type="FunFam" id="3.90.950.10:FF:000002">
    <property type="entry name" value="Inosine/xanthosine triphosphatase"/>
    <property type="match status" value="1"/>
</dbReference>
<dbReference type="Gene3D" id="3.90.950.10">
    <property type="match status" value="1"/>
</dbReference>
<dbReference type="HAMAP" id="MF_00648">
    <property type="entry name" value="Non_canon_purine_NTPase_YjjX"/>
    <property type="match status" value="1"/>
</dbReference>
<dbReference type="InterPro" id="IPR029001">
    <property type="entry name" value="ITPase-like_fam"/>
</dbReference>
<dbReference type="InterPro" id="IPR002786">
    <property type="entry name" value="Non_canon_purine_NTPase"/>
</dbReference>
<dbReference type="InterPro" id="IPR026533">
    <property type="entry name" value="NTPase/PRRC1"/>
</dbReference>
<dbReference type="InterPro" id="IPR050299">
    <property type="entry name" value="YjjX_NTPase"/>
</dbReference>
<dbReference type="PANTHER" id="PTHR34699">
    <property type="match status" value="1"/>
</dbReference>
<dbReference type="PANTHER" id="PTHR34699:SF2">
    <property type="entry name" value="NON-CANONICAL PURINE NTP PHOSPHATASE_PRRC1 DOMAIN-CONTAINING PROTEIN"/>
    <property type="match status" value="1"/>
</dbReference>
<dbReference type="Pfam" id="PF01931">
    <property type="entry name" value="NTPase_I-T"/>
    <property type="match status" value="1"/>
</dbReference>
<dbReference type="SUPFAM" id="SSF52972">
    <property type="entry name" value="ITPase-like"/>
    <property type="match status" value="1"/>
</dbReference>
<protein>
    <recommendedName>
        <fullName evidence="1">Probable inosine/xanthosine triphosphatase</fullName>
        <shortName evidence="1">ITPase/XTPase</shortName>
        <ecNumber evidence="1">3.6.1.73</ecNumber>
    </recommendedName>
    <alternativeName>
        <fullName evidence="1">Non-canonical purine NTP phosphatase</fullName>
    </alternativeName>
    <alternativeName>
        <fullName evidence="1">Non-standard purine NTP phosphatase</fullName>
    </alternativeName>
    <alternativeName>
        <fullName evidence="1">Nucleoside-triphosphate phosphatase</fullName>
        <shortName evidence="1">NTPase</shortName>
    </alternativeName>
</protein>
<keyword id="KW-0378">Hydrolase</keyword>
<keyword id="KW-0460">Magnesium</keyword>
<keyword id="KW-0464">Manganese</keyword>
<keyword id="KW-0479">Metal-binding</keyword>
<keyword id="KW-0546">Nucleotide metabolism</keyword>
<keyword id="KW-0547">Nucleotide-binding</keyword>